<comment type="function">
    <text evidence="1">Probable mitochondrial mRNA stabilization factor.</text>
</comment>
<comment type="subcellular location">
    <subcellularLocation>
        <location evidence="1">Mitochondrion inner membrane</location>
        <topology evidence="1">Peripheral membrane protein</topology>
        <orientation evidence="1">Matrix side</orientation>
    </subcellularLocation>
</comment>
<comment type="similarity">
    <text evidence="4">Belongs to the ATP25 family.</text>
</comment>
<sequence length="660" mass="73770">MAAAASLVRSLTIAQTSRSPQMRQFFTTPNLKMESSNHHTSDRDVATELHHDAPVPNESANSSQDVPWYLQVEPVIETTHPIARQQQIPDVPENAPSITREILQHLSLEIGLDDMVLLDLRGRDPLPALGGNVIMVIGSARGVKHLNVSADRFCRWLRSTYKLRPYADGLLGRNELKIKLRRKARRARLASSAGTTADTSDDGITTGWICVNIGSVDDPSVIQNMREGGFEGFGKVQGGTRIVVQMFTEEKRADVDLEQLWAPKKDVTGPDSEKRSILAEEDYQVRLQSSTPTEHKSNQPMSNVPRPPPRIDLSQRRNFSTVMRQKSVHTDVKSGSNYDTADVGDELGHQERQLSAIFQTINGLSPDELIEQLGSGPQDMGSTELLRDCYSFAGTDSNRKSTIRLMLSAVAVSLQHPGYTKEYLWKLFLEQTASGYRLSELQAFEIASAFLVPRLESQEQKRTISELVDFDIESAMRVMDNLSLSGETIIMKHRLYNMMYRALLLSLADGNANKNNARLKALRIRTLMDEIGLEWQGTDARETMQLRLLLGDVDGFYEIWHAIAFNEGSRTADDYEVLFRVHAEAGNAAHARECLAVWISMMGRENPPVQPDAGIISAIAKCAYVAGQHANTFRLSLVSNEWEKAQPLIVEEMRTLEQLS</sequence>
<name>ATP25_TALMQ</name>
<accession>B6Q2V1</accession>
<gene>
    <name type="primary">atp25</name>
    <name type="ORF">PMAA_038320</name>
</gene>
<protein>
    <recommendedName>
        <fullName>ATPase synthesis protein 25, mitochondrial</fullName>
    </recommendedName>
</protein>
<feature type="transit peptide" description="Mitochondrion" evidence="2">
    <location>
        <begin position="1"/>
        <end position="32"/>
    </location>
</feature>
<feature type="chain" id="PRO_0000404482" description="ATPase synthesis protein 25, mitochondrial">
    <location>
        <begin position="33"/>
        <end position="660"/>
    </location>
</feature>
<feature type="region of interest" description="Disordered" evidence="3">
    <location>
        <begin position="287"/>
        <end position="313"/>
    </location>
</feature>
<feature type="compositionally biased region" description="Polar residues" evidence="3">
    <location>
        <begin position="287"/>
        <end position="302"/>
    </location>
</feature>
<organism>
    <name type="scientific">Talaromyces marneffei (strain ATCC 18224 / CBS 334.59 / QM 7333)</name>
    <name type="common">Penicillium marneffei</name>
    <dbReference type="NCBI Taxonomy" id="441960"/>
    <lineage>
        <taxon>Eukaryota</taxon>
        <taxon>Fungi</taxon>
        <taxon>Dikarya</taxon>
        <taxon>Ascomycota</taxon>
        <taxon>Pezizomycotina</taxon>
        <taxon>Eurotiomycetes</taxon>
        <taxon>Eurotiomycetidae</taxon>
        <taxon>Eurotiales</taxon>
        <taxon>Trichocomaceae</taxon>
        <taxon>Talaromyces</taxon>
        <taxon>Talaromyces sect. Talaromyces</taxon>
    </lineage>
</organism>
<dbReference type="EMBL" id="DS995899">
    <property type="protein sequence ID" value="EEA29049.1"/>
    <property type="molecule type" value="Genomic_DNA"/>
</dbReference>
<dbReference type="RefSeq" id="XP_002145564.1">
    <property type="nucleotide sequence ID" value="XM_002145528.1"/>
</dbReference>
<dbReference type="SMR" id="B6Q2V1"/>
<dbReference type="STRING" id="441960.B6Q2V1"/>
<dbReference type="VEuPathDB" id="FungiDB:PMAA_038320"/>
<dbReference type="HOGENOM" id="CLU_016140_0_0_1"/>
<dbReference type="OrthoDB" id="14954at28568"/>
<dbReference type="PhylomeDB" id="B6Q2V1"/>
<dbReference type="Proteomes" id="UP000001294">
    <property type="component" value="Unassembled WGS sequence"/>
</dbReference>
<dbReference type="GO" id="GO:0005743">
    <property type="term" value="C:mitochondrial inner membrane"/>
    <property type="evidence" value="ECO:0007669"/>
    <property type="project" value="UniProtKB-SubCell"/>
</dbReference>
<dbReference type="GO" id="GO:0140053">
    <property type="term" value="P:mitochondrial gene expression"/>
    <property type="evidence" value="ECO:0007669"/>
    <property type="project" value="InterPro"/>
</dbReference>
<dbReference type="GO" id="GO:0048255">
    <property type="term" value="P:mRNA stabilization"/>
    <property type="evidence" value="ECO:0007669"/>
    <property type="project" value="TreeGrafter"/>
</dbReference>
<dbReference type="FunFam" id="3.30.460.10:FF:000044">
    <property type="entry name" value="ATPase synthesis protein 25, mitochondrial"/>
    <property type="match status" value="1"/>
</dbReference>
<dbReference type="Gene3D" id="3.30.460.10">
    <property type="entry name" value="Beta Polymerase, domain 2"/>
    <property type="match status" value="1"/>
</dbReference>
<dbReference type="InterPro" id="IPR040152">
    <property type="entry name" value="Atp25"/>
</dbReference>
<dbReference type="InterPro" id="IPR043519">
    <property type="entry name" value="NT_sf"/>
</dbReference>
<dbReference type="PANTHER" id="PTHR28087">
    <property type="entry name" value="ATPASE SYNTHESIS PROTEIN 25, MITOCHONDRIAL"/>
    <property type="match status" value="1"/>
</dbReference>
<dbReference type="PANTHER" id="PTHR28087:SF1">
    <property type="entry name" value="ATPASE SYNTHESIS PROTEIN 25, MITOCHONDRIAL"/>
    <property type="match status" value="1"/>
</dbReference>
<keyword id="KW-0472">Membrane</keyword>
<keyword id="KW-0496">Mitochondrion</keyword>
<keyword id="KW-0999">Mitochondrion inner membrane</keyword>
<keyword id="KW-1185">Reference proteome</keyword>
<keyword id="KW-0809">Transit peptide</keyword>
<reference key="1">
    <citation type="journal article" date="2015" name="Genome Announc.">
        <title>Genome sequence of the AIDS-associated pathogen Penicillium marneffei (ATCC18224) and its near taxonomic relative Talaromyces stipitatus (ATCC10500).</title>
        <authorList>
            <person name="Nierman W.C."/>
            <person name="Fedorova-Abrams N.D."/>
            <person name="Andrianopoulos A."/>
        </authorList>
    </citation>
    <scope>NUCLEOTIDE SEQUENCE [LARGE SCALE GENOMIC DNA]</scope>
    <source>
        <strain>ATCC 18224 / CBS 334.59 / QM 7333</strain>
    </source>
</reference>
<evidence type="ECO:0000250" key="1"/>
<evidence type="ECO:0000255" key="2"/>
<evidence type="ECO:0000256" key="3">
    <source>
        <dbReference type="SAM" id="MobiDB-lite"/>
    </source>
</evidence>
<evidence type="ECO:0000305" key="4"/>
<proteinExistence type="inferred from homology"/>